<sequence length="125" mass="13867">MINSPRVCIQVQSVYIEAQSSPDNERYVFAYTVTIRNLGRAPVQLLGRYWLITNGNGRETEVQGEGVVGVQPLIAPGEEYQYTSGAIIETPLGTMQGHYEMIDENGVPFSIDIPVFRLAVPTLIH</sequence>
<gene>
    <name evidence="1" type="primary">apaG</name>
    <name type="ordered locus">SbBS512_E0044</name>
</gene>
<evidence type="ECO:0000255" key="1">
    <source>
        <dbReference type="HAMAP-Rule" id="MF_00791"/>
    </source>
</evidence>
<organism>
    <name type="scientific">Shigella boydii serotype 18 (strain CDC 3083-94 / BS512)</name>
    <dbReference type="NCBI Taxonomy" id="344609"/>
    <lineage>
        <taxon>Bacteria</taxon>
        <taxon>Pseudomonadati</taxon>
        <taxon>Pseudomonadota</taxon>
        <taxon>Gammaproteobacteria</taxon>
        <taxon>Enterobacterales</taxon>
        <taxon>Enterobacteriaceae</taxon>
        <taxon>Shigella</taxon>
    </lineage>
</organism>
<keyword id="KW-1185">Reference proteome</keyword>
<protein>
    <recommendedName>
        <fullName evidence="1">Protein ApaG</fullName>
    </recommendedName>
</protein>
<reference key="1">
    <citation type="submission" date="2008-05" db="EMBL/GenBank/DDBJ databases">
        <title>Complete sequence of Shigella boydii serotype 18 strain BS512.</title>
        <authorList>
            <person name="Rasko D.A."/>
            <person name="Rosovitz M."/>
            <person name="Maurelli A.T."/>
            <person name="Myers G."/>
            <person name="Seshadri R."/>
            <person name="Cer R."/>
            <person name="Jiang L."/>
            <person name="Ravel J."/>
            <person name="Sebastian Y."/>
        </authorList>
    </citation>
    <scope>NUCLEOTIDE SEQUENCE [LARGE SCALE GENOMIC DNA]</scope>
    <source>
        <strain>CDC 3083-94 / BS512</strain>
    </source>
</reference>
<feature type="chain" id="PRO_1000133817" description="Protein ApaG">
    <location>
        <begin position="1"/>
        <end position="125"/>
    </location>
</feature>
<feature type="domain" description="ApaG" evidence="1">
    <location>
        <begin position="1"/>
        <end position="125"/>
    </location>
</feature>
<proteinExistence type="inferred from homology"/>
<name>APAG_SHIB3</name>
<accession>B2U258</accession>
<dbReference type="EMBL" id="CP001063">
    <property type="protein sequence ID" value="ACD07632.1"/>
    <property type="molecule type" value="Genomic_DNA"/>
</dbReference>
<dbReference type="RefSeq" id="WP_000610901.1">
    <property type="nucleotide sequence ID" value="NC_010658.1"/>
</dbReference>
<dbReference type="SMR" id="B2U258"/>
<dbReference type="STRING" id="344609.SbBS512_E0044"/>
<dbReference type="GeneID" id="93777385"/>
<dbReference type="KEGG" id="sbc:SbBS512_E0044"/>
<dbReference type="HOGENOM" id="CLU_128074_0_0_6"/>
<dbReference type="Proteomes" id="UP000001030">
    <property type="component" value="Chromosome"/>
</dbReference>
<dbReference type="GO" id="GO:0070987">
    <property type="term" value="P:error-free translesion synthesis"/>
    <property type="evidence" value="ECO:0007669"/>
    <property type="project" value="TreeGrafter"/>
</dbReference>
<dbReference type="Gene3D" id="2.60.40.1470">
    <property type="entry name" value="ApaG domain"/>
    <property type="match status" value="1"/>
</dbReference>
<dbReference type="HAMAP" id="MF_00791">
    <property type="entry name" value="ApaG"/>
    <property type="match status" value="1"/>
</dbReference>
<dbReference type="InterPro" id="IPR007474">
    <property type="entry name" value="ApaG_domain"/>
</dbReference>
<dbReference type="InterPro" id="IPR036767">
    <property type="entry name" value="ApaG_sf"/>
</dbReference>
<dbReference type="InterPro" id="IPR023065">
    <property type="entry name" value="Uncharacterised_ApaG"/>
</dbReference>
<dbReference type="NCBIfam" id="NF003967">
    <property type="entry name" value="PRK05461.1"/>
    <property type="match status" value="1"/>
</dbReference>
<dbReference type="PANTHER" id="PTHR14289">
    <property type="entry name" value="F-BOX ONLY PROTEIN 3"/>
    <property type="match status" value="1"/>
</dbReference>
<dbReference type="PANTHER" id="PTHR14289:SF16">
    <property type="entry name" value="POLYMERASE DELTA-INTERACTING PROTEIN 2"/>
    <property type="match status" value="1"/>
</dbReference>
<dbReference type="Pfam" id="PF04379">
    <property type="entry name" value="DUF525"/>
    <property type="match status" value="1"/>
</dbReference>
<dbReference type="SUPFAM" id="SSF110069">
    <property type="entry name" value="ApaG-like"/>
    <property type="match status" value="1"/>
</dbReference>
<dbReference type="PROSITE" id="PS51087">
    <property type="entry name" value="APAG"/>
    <property type="match status" value="1"/>
</dbReference>